<feature type="signal peptide" evidence="2">
    <location>
        <begin position="1"/>
        <end position="15"/>
    </location>
</feature>
<feature type="propeptide" id="PRO_0000027165" evidence="1">
    <location>
        <begin position="16"/>
        <end position="147"/>
    </location>
</feature>
<feature type="chain" id="PRO_0000027166" description="Subtilisin-like proteinase Spm1">
    <location>
        <begin position="148"/>
        <end position="536"/>
    </location>
</feature>
<feature type="domain" description="Inhibitor I9" evidence="2">
    <location>
        <begin position="44"/>
        <end position="137"/>
    </location>
</feature>
<feature type="domain" description="Peptidase S8" evidence="3">
    <location>
        <begin position="156"/>
        <end position="462"/>
    </location>
</feature>
<feature type="active site" description="Charge relay system" evidence="3">
    <location>
        <position position="192"/>
    </location>
</feature>
<feature type="active site" description="Charge relay system" evidence="3">
    <location>
        <position position="224"/>
    </location>
</feature>
<feature type="active site" description="Charge relay system" evidence="3">
    <location>
        <position position="390"/>
    </location>
</feature>
<feature type="glycosylation site" description="N-linked (GlcNAc...) asparagine" evidence="2">
    <location>
        <position position="254"/>
    </location>
</feature>
<feature type="glycosylation site" description="N-linked (GlcNAc...) asparagine" evidence="2">
    <location>
        <position position="294"/>
    </location>
</feature>
<protein>
    <recommendedName>
        <fullName>Subtilisin-like proteinase Spm1</fullName>
        <ecNumber>3.4.21.-</ecNumber>
    </recommendedName>
    <alternativeName>
        <fullName>Serine protease of Magnaporthe 1</fullName>
    </alternativeName>
</protein>
<sequence>MKSVILLSLAACAVAAPTAGVETIHDGAAPILSSSNAEAIPNAYIIKFKKHVDHKSAADHQMWIQKVHGEREDERLELRKRGLFDSVNDAFTGLKHTYNVGSGFLGYAGHFDEETIEKVRRHPDVEAIERDTIVHTMRYEEVKKDECNPDLEKGAPWGLSRVSHRESLSFSTYNKYLYSAEGGEGVDAYVIDTGTNIDHVDFEGRAHWGKTIPANDQDIDGNGHGTHCSGTVAGKKYGVAKKAQVYAVKVLKSNGSGTMSDVIAGVDFAAKSHKAQVSAAKDGKRKGFKGSVANMSLGGGKTTLLDAAVNAAVDAGIHFAVAAGNDNADACNYSPAAAAKAVTVGASALDDSRAYFSNWGKCTDIFAPGLNIQSTWIGSKTAINTISGTSMASPHIAGLLAYYLSLQPASDSEYSLATITPEKLKADLIKVGTVGILTDIPKDTPNVLAWNGGGCSNYFEIVSKGGYKAKAQADKSSSLLDSVTELEKAIEHDFRVISGKVVKEASSMTGQAEKLSEKIHQAVDEELKHFFGEARV</sequence>
<reference key="1">
    <citation type="journal article" date="2002" name="Biosci. Biotechnol. Biochem.">
        <title>Identification of a putative vacuolar serine protease gene in the rice blast fungus, Magnaporthe grisea.</title>
        <authorList>
            <person name="Fukiya S."/>
            <person name="Kuge T."/>
            <person name="Tanishima T."/>
            <person name="Sone T."/>
            <person name="Kamakura T."/>
            <person name="Yamaguchi I."/>
            <person name="Tomita F."/>
        </authorList>
    </citation>
    <scope>NUCLEOTIDE SEQUENCE [GENOMIC DNA]</scope>
    <source>
        <strain>Hoku1</strain>
    </source>
</reference>
<reference key="2">
    <citation type="journal article" date="2005" name="Nature">
        <title>The genome sequence of the rice blast fungus Magnaporthe grisea.</title>
        <authorList>
            <person name="Dean R.A."/>
            <person name="Talbot N.J."/>
            <person name="Ebbole D.J."/>
            <person name="Farman M.L."/>
            <person name="Mitchell T.K."/>
            <person name="Orbach M.J."/>
            <person name="Thon M.R."/>
            <person name="Kulkarni R."/>
            <person name="Xu J.-R."/>
            <person name="Pan H."/>
            <person name="Read N.D."/>
            <person name="Lee Y.-H."/>
            <person name="Carbone I."/>
            <person name="Brown D."/>
            <person name="Oh Y.Y."/>
            <person name="Donofrio N."/>
            <person name="Jeong J.S."/>
            <person name="Soanes D.M."/>
            <person name="Djonovic S."/>
            <person name="Kolomiets E."/>
            <person name="Rehmeyer C."/>
            <person name="Li W."/>
            <person name="Harding M."/>
            <person name="Kim S."/>
            <person name="Lebrun M.-H."/>
            <person name="Bohnert H."/>
            <person name="Coughlan S."/>
            <person name="Butler J."/>
            <person name="Calvo S.E."/>
            <person name="Ma L.-J."/>
            <person name="Nicol R."/>
            <person name="Purcell S."/>
            <person name="Nusbaum C."/>
            <person name="Galagan J.E."/>
            <person name="Birren B.W."/>
        </authorList>
    </citation>
    <scope>NUCLEOTIDE SEQUENCE [LARGE SCALE GENOMIC DNA]</scope>
    <source>
        <strain>70-15 / ATCC MYA-4617 / FGSC 8958</strain>
    </source>
</reference>
<accession>P58371</accession>
<accession>A4QR64</accession>
<accession>G4N6T0</accession>
<keyword id="KW-0325">Glycoprotein</keyword>
<keyword id="KW-0378">Hydrolase</keyword>
<keyword id="KW-0645">Protease</keyword>
<keyword id="KW-1185">Reference proteome</keyword>
<keyword id="KW-0720">Serine protease</keyword>
<keyword id="KW-0732">Signal</keyword>
<keyword id="KW-0926">Vacuole</keyword>
<keyword id="KW-0865">Zymogen</keyword>
<proteinExistence type="inferred from homology"/>
<organism>
    <name type="scientific">Pyricularia oryzae (strain 70-15 / ATCC MYA-4617 / FGSC 8958)</name>
    <name type="common">Rice blast fungus</name>
    <name type="synonym">Magnaporthe oryzae</name>
    <dbReference type="NCBI Taxonomy" id="242507"/>
    <lineage>
        <taxon>Eukaryota</taxon>
        <taxon>Fungi</taxon>
        <taxon>Dikarya</taxon>
        <taxon>Ascomycota</taxon>
        <taxon>Pezizomycotina</taxon>
        <taxon>Sordariomycetes</taxon>
        <taxon>Sordariomycetidae</taxon>
        <taxon>Magnaporthales</taxon>
        <taxon>Pyriculariaceae</taxon>
        <taxon>Pyricularia</taxon>
    </lineage>
</organism>
<gene>
    <name type="primary">SPM1</name>
    <name type="ORF">MGG_03670</name>
</gene>
<comment type="subcellular location">
    <subcellularLocation>
        <location evidence="4">Vacuole</location>
    </subcellularLocation>
</comment>
<comment type="similarity">
    <text evidence="4">Belongs to the peptidase S8 family.</text>
</comment>
<name>SPM1_PYRO7</name>
<dbReference type="EC" id="3.4.21.-"/>
<dbReference type="EMBL" id="AB070268">
    <property type="protein sequence ID" value="BAB63284.1"/>
    <property type="molecule type" value="Genomic_DNA"/>
</dbReference>
<dbReference type="EMBL" id="CM001234">
    <property type="protein sequence ID" value="EHA49897.1"/>
    <property type="molecule type" value="Genomic_DNA"/>
</dbReference>
<dbReference type="PIR" id="JC7826">
    <property type="entry name" value="JC7826"/>
</dbReference>
<dbReference type="RefSeq" id="XP_003716216.1">
    <property type="nucleotide sequence ID" value="XM_003716168.1"/>
</dbReference>
<dbReference type="SMR" id="P58371"/>
<dbReference type="FunCoup" id="P58371">
    <property type="interactions" value="312"/>
</dbReference>
<dbReference type="MEROPS" id="S08.052"/>
<dbReference type="GlyCosmos" id="P58371">
    <property type="glycosylation" value="2 sites, No reported glycans"/>
</dbReference>
<dbReference type="EnsemblFungi" id="MGG_03670T0">
    <property type="protein sequence ID" value="MGG_03670T0"/>
    <property type="gene ID" value="MGG_03670"/>
</dbReference>
<dbReference type="GeneID" id="2676592"/>
<dbReference type="KEGG" id="mgr:MGG_03670"/>
<dbReference type="VEuPathDB" id="FungiDB:MGG_03670"/>
<dbReference type="eggNOG" id="KOG1153">
    <property type="taxonomic scope" value="Eukaryota"/>
</dbReference>
<dbReference type="HOGENOM" id="CLU_011263_1_4_1"/>
<dbReference type="InParanoid" id="P58371"/>
<dbReference type="OMA" id="RHPDVDY"/>
<dbReference type="OrthoDB" id="206201at2759"/>
<dbReference type="PHI-base" id="PHI:2117"/>
<dbReference type="Proteomes" id="UP000009058">
    <property type="component" value="Chromosome 4"/>
</dbReference>
<dbReference type="GO" id="GO:0005773">
    <property type="term" value="C:vacuole"/>
    <property type="evidence" value="ECO:0007669"/>
    <property type="project" value="UniProtKB-SubCell"/>
</dbReference>
<dbReference type="GO" id="GO:0004252">
    <property type="term" value="F:serine-type endopeptidase activity"/>
    <property type="evidence" value="ECO:0007669"/>
    <property type="project" value="EnsemblFungi"/>
</dbReference>
<dbReference type="GO" id="GO:0000425">
    <property type="term" value="P:pexophagy"/>
    <property type="evidence" value="ECO:0007669"/>
    <property type="project" value="EnsemblFungi"/>
</dbReference>
<dbReference type="GO" id="GO:0007039">
    <property type="term" value="P:protein catabolic process in the vacuole"/>
    <property type="evidence" value="ECO:0007669"/>
    <property type="project" value="EnsemblFungi"/>
</dbReference>
<dbReference type="GO" id="GO:0006508">
    <property type="term" value="P:proteolysis"/>
    <property type="evidence" value="ECO:0007669"/>
    <property type="project" value="UniProtKB-KW"/>
</dbReference>
<dbReference type="GO" id="GO:0030435">
    <property type="term" value="P:sporulation resulting in formation of a cellular spore"/>
    <property type="evidence" value="ECO:0007669"/>
    <property type="project" value="EnsemblFungi"/>
</dbReference>
<dbReference type="CDD" id="cd04077">
    <property type="entry name" value="Peptidases_S8_PCSK9_ProteinaseK_like"/>
    <property type="match status" value="1"/>
</dbReference>
<dbReference type="FunFam" id="3.30.70.80:FF:000006">
    <property type="entry name" value="Autophagic serine protease Alp2"/>
    <property type="match status" value="1"/>
</dbReference>
<dbReference type="FunFam" id="3.40.50.200:FF:000007">
    <property type="entry name" value="Subtilisin-like serine protease"/>
    <property type="match status" value="1"/>
</dbReference>
<dbReference type="Gene3D" id="3.30.70.80">
    <property type="entry name" value="Peptidase S8 propeptide/proteinase inhibitor I9"/>
    <property type="match status" value="1"/>
</dbReference>
<dbReference type="Gene3D" id="3.40.50.200">
    <property type="entry name" value="Peptidase S8/S53 domain"/>
    <property type="match status" value="1"/>
</dbReference>
<dbReference type="InterPro" id="IPR034193">
    <property type="entry name" value="PCSK9_ProteinaseK-like"/>
</dbReference>
<dbReference type="InterPro" id="IPR000209">
    <property type="entry name" value="Peptidase_S8/S53_dom"/>
</dbReference>
<dbReference type="InterPro" id="IPR036852">
    <property type="entry name" value="Peptidase_S8/S53_dom_sf"/>
</dbReference>
<dbReference type="InterPro" id="IPR022398">
    <property type="entry name" value="Peptidase_S8_His-AS"/>
</dbReference>
<dbReference type="InterPro" id="IPR023828">
    <property type="entry name" value="Peptidase_S8_Ser-AS"/>
</dbReference>
<dbReference type="InterPro" id="IPR050131">
    <property type="entry name" value="Peptidase_S8_subtilisin-like"/>
</dbReference>
<dbReference type="InterPro" id="IPR015500">
    <property type="entry name" value="Peptidase_S8_subtilisin-rel"/>
</dbReference>
<dbReference type="InterPro" id="IPR010259">
    <property type="entry name" value="S8pro/Inhibitor_I9"/>
</dbReference>
<dbReference type="InterPro" id="IPR037045">
    <property type="entry name" value="S8pro/Inhibitor_I9_sf"/>
</dbReference>
<dbReference type="PANTHER" id="PTHR43806:SF11">
    <property type="entry name" value="CEREVISIN-RELATED"/>
    <property type="match status" value="1"/>
</dbReference>
<dbReference type="PANTHER" id="PTHR43806">
    <property type="entry name" value="PEPTIDASE S8"/>
    <property type="match status" value="1"/>
</dbReference>
<dbReference type="Pfam" id="PF05922">
    <property type="entry name" value="Inhibitor_I9"/>
    <property type="match status" value="1"/>
</dbReference>
<dbReference type="Pfam" id="PF00082">
    <property type="entry name" value="Peptidase_S8"/>
    <property type="match status" value="1"/>
</dbReference>
<dbReference type="PRINTS" id="PR00723">
    <property type="entry name" value="SUBTILISIN"/>
</dbReference>
<dbReference type="SUPFAM" id="SSF52743">
    <property type="entry name" value="Subtilisin-like"/>
    <property type="match status" value="1"/>
</dbReference>
<dbReference type="PROSITE" id="PS51892">
    <property type="entry name" value="SUBTILASE"/>
    <property type="match status" value="1"/>
</dbReference>
<dbReference type="PROSITE" id="PS00137">
    <property type="entry name" value="SUBTILASE_HIS"/>
    <property type="match status" value="1"/>
</dbReference>
<dbReference type="PROSITE" id="PS00138">
    <property type="entry name" value="SUBTILASE_SER"/>
    <property type="match status" value="1"/>
</dbReference>
<evidence type="ECO:0000250" key="1"/>
<evidence type="ECO:0000255" key="2"/>
<evidence type="ECO:0000255" key="3">
    <source>
        <dbReference type="PROSITE-ProRule" id="PRU01240"/>
    </source>
</evidence>
<evidence type="ECO:0000305" key="4"/>